<reference key="1">
    <citation type="journal article" date="2009" name="Proc. Natl. Acad. Sci. U.S.A.">
        <title>The genomic basis of trophic strategy in marine bacteria.</title>
        <authorList>
            <person name="Lauro F.M."/>
            <person name="McDougald D."/>
            <person name="Thomas T."/>
            <person name="Williams T.J."/>
            <person name="Egan S."/>
            <person name="Rice S."/>
            <person name="DeMaere M.Z."/>
            <person name="Ting L."/>
            <person name="Ertan H."/>
            <person name="Johnson J."/>
            <person name="Ferriera S."/>
            <person name="Lapidus A."/>
            <person name="Anderson I."/>
            <person name="Kyrpides N."/>
            <person name="Munk A.C."/>
            <person name="Detter C."/>
            <person name="Han C.S."/>
            <person name="Brown M.V."/>
            <person name="Robb F.T."/>
            <person name="Kjelleberg S."/>
            <person name="Cavicchioli R."/>
        </authorList>
    </citation>
    <scope>NUCLEOTIDE SEQUENCE [LARGE SCALE GENOMIC DNA]</scope>
    <source>
        <strain>DSM 13593 / LMG 18877 / RB2256</strain>
    </source>
</reference>
<accession>Q1GVM0</accession>
<keyword id="KW-0028">Amino-acid biosynthesis</keyword>
<keyword id="KW-0963">Cytoplasm</keyword>
<keyword id="KW-0521">NADP</keyword>
<keyword id="KW-0560">Oxidoreductase</keyword>
<keyword id="KW-0641">Proline biosynthesis</keyword>
<keyword id="KW-1185">Reference proteome</keyword>
<gene>
    <name evidence="1" type="primary">proA</name>
    <name type="ordered locus">Sala_0581</name>
</gene>
<dbReference type="EC" id="1.2.1.41" evidence="1"/>
<dbReference type="EMBL" id="CP000356">
    <property type="protein sequence ID" value="ABF52302.1"/>
    <property type="molecule type" value="Genomic_DNA"/>
</dbReference>
<dbReference type="SMR" id="Q1GVM0"/>
<dbReference type="STRING" id="317655.Sala_0581"/>
<dbReference type="KEGG" id="sal:Sala_0581"/>
<dbReference type="eggNOG" id="COG0014">
    <property type="taxonomic scope" value="Bacteria"/>
</dbReference>
<dbReference type="HOGENOM" id="CLU_030231_0_0_5"/>
<dbReference type="OrthoDB" id="9809970at2"/>
<dbReference type="UniPathway" id="UPA00098">
    <property type="reaction ID" value="UER00360"/>
</dbReference>
<dbReference type="Proteomes" id="UP000006578">
    <property type="component" value="Chromosome"/>
</dbReference>
<dbReference type="GO" id="GO:0005737">
    <property type="term" value="C:cytoplasm"/>
    <property type="evidence" value="ECO:0007669"/>
    <property type="project" value="UniProtKB-SubCell"/>
</dbReference>
<dbReference type="GO" id="GO:0004350">
    <property type="term" value="F:glutamate-5-semialdehyde dehydrogenase activity"/>
    <property type="evidence" value="ECO:0007669"/>
    <property type="project" value="UniProtKB-UniRule"/>
</dbReference>
<dbReference type="GO" id="GO:0050661">
    <property type="term" value="F:NADP binding"/>
    <property type="evidence" value="ECO:0007669"/>
    <property type="project" value="InterPro"/>
</dbReference>
<dbReference type="GO" id="GO:0055129">
    <property type="term" value="P:L-proline biosynthetic process"/>
    <property type="evidence" value="ECO:0007669"/>
    <property type="project" value="UniProtKB-UniRule"/>
</dbReference>
<dbReference type="CDD" id="cd07079">
    <property type="entry name" value="ALDH_F18-19_ProA-GPR"/>
    <property type="match status" value="1"/>
</dbReference>
<dbReference type="Gene3D" id="3.40.605.10">
    <property type="entry name" value="Aldehyde Dehydrogenase, Chain A, domain 1"/>
    <property type="match status" value="1"/>
</dbReference>
<dbReference type="Gene3D" id="3.40.309.10">
    <property type="entry name" value="Aldehyde Dehydrogenase, Chain A, domain 2"/>
    <property type="match status" value="1"/>
</dbReference>
<dbReference type="HAMAP" id="MF_00412">
    <property type="entry name" value="ProA"/>
    <property type="match status" value="1"/>
</dbReference>
<dbReference type="InterPro" id="IPR016161">
    <property type="entry name" value="Ald_DH/histidinol_DH"/>
</dbReference>
<dbReference type="InterPro" id="IPR016163">
    <property type="entry name" value="Ald_DH_C"/>
</dbReference>
<dbReference type="InterPro" id="IPR016162">
    <property type="entry name" value="Ald_DH_N"/>
</dbReference>
<dbReference type="InterPro" id="IPR015590">
    <property type="entry name" value="Aldehyde_DH_dom"/>
</dbReference>
<dbReference type="InterPro" id="IPR020593">
    <property type="entry name" value="G-glutamylP_reductase_CS"/>
</dbReference>
<dbReference type="InterPro" id="IPR012134">
    <property type="entry name" value="Glu-5-SA_DH"/>
</dbReference>
<dbReference type="InterPro" id="IPR000965">
    <property type="entry name" value="GPR_dom"/>
</dbReference>
<dbReference type="NCBIfam" id="NF001221">
    <property type="entry name" value="PRK00197.1"/>
    <property type="match status" value="1"/>
</dbReference>
<dbReference type="NCBIfam" id="TIGR00407">
    <property type="entry name" value="proA"/>
    <property type="match status" value="1"/>
</dbReference>
<dbReference type="PANTHER" id="PTHR11063:SF8">
    <property type="entry name" value="DELTA-1-PYRROLINE-5-CARBOXYLATE SYNTHASE"/>
    <property type="match status" value="1"/>
</dbReference>
<dbReference type="PANTHER" id="PTHR11063">
    <property type="entry name" value="GLUTAMATE SEMIALDEHYDE DEHYDROGENASE"/>
    <property type="match status" value="1"/>
</dbReference>
<dbReference type="Pfam" id="PF00171">
    <property type="entry name" value="Aldedh"/>
    <property type="match status" value="1"/>
</dbReference>
<dbReference type="PIRSF" id="PIRSF000151">
    <property type="entry name" value="GPR"/>
    <property type="match status" value="1"/>
</dbReference>
<dbReference type="SUPFAM" id="SSF53720">
    <property type="entry name" value="ALDH-like"/>
    <property type="match status" value="1"/>
</dbReference>
<dbReference type="PROSITE" id="PS01223">
    <property type="entry name" value="PROA"/>
    <property type="match status" value="1"/>
</dbReference>
<protein>
    <recommendedName>
        <fullName evidence="1">Gamma-glutamyl phosphate reductase</fullName>
        <shortName evidence="1">GPR</shortName>
        <ecNumber evidence="1">1.2.1.41</ecNumber>
    </recommendedName>
    <alternativeName>
        <fullName evidence="1">Glutamate-5-semialdehyde dehydrogenase</fullName>
    </alternativeName>
    <alternativeName>
        <fullName evidence="1">Glutamyl-gamma-semialdehyde dehydrogenase</fullName>
        <shortName evidence="1">GSA dehydrogenase</shortName>
    </alternativeName>
</protein>
<comment type="function">
    <text evidence="1">Catalyzes the NADPH-dependent reduction of L-glutamate 5-phosphate into L-glutamate 5-semialdehyde and phosphate. The product spontaneously undergoes cyclization to form 1-pyrroline-5-carboxylate.</text>
</comment>
<comment type="catalytic activity">
    <reaction evidence="1">
        <text>L-glutamate 5-semialdehyde + phosphate + NADP(+) = L-glutamyl 5-phosphate + NADPH + H(+)</text>
        <dbReference type="Rhea" id="RHEA:19541"/>
        <dbReference type="ChEBI" id="CHEBI:15378"/>
        <dbReference type="ChEBI" id="CHEBI:43474"/>
        <dbReference type="ChEBI" id="CHEBI:57783"/>
        <dbReference type="ChEBI" id="CHEBI:58066"/>
        <dbReference type="ChEBI" id="CHEBI:58274"/>
        <dbReference type="ChEBI" id="CHEBI:58349"/>
        <dbReference type="EC" id="1.2.1.41"/>
    </reaction>
</comment>
<comment type="pathway">
    <text evidence="1">Amino-acid biosynthesis; L-proline biosynthesis; L-glutamate 5-semialdehyde from L-glutamate: step 2/2.</text>
</comment>
<comment type="subcellular location">
    <subcellularLocation>
        <location evidence="1">Cytoplasm</location>
    </subcellularLocation>
</comment>
<comment type="similarity">
    <text evidence="1">Belongs to the gamma-glutamyl phosphate reductase family.</text>
</comment>
<organism>
    <name type="scientific">Sphingopyxis alaskensis (strain DSM 13593 / LMG 18877 / RB2256)</name>
    <name type="common">Sphingomonas alaskensis</name>
    <dbReference type="NCBI Taxonomy" id="317655"/>
    <lineage>
        <taxon>Bacteria</taxon>
        <taxon>Pseudomonadati</taxon>
        <taxon>Pseudomonadota</taxon>
        <taxon>Alphaproteobacteria</taxon>
        <taxon>Sphingomonadales</taxon>
        <taxon>Sphingomonadaceae</taxon>
        <taxon>Sphingopyxis</taxon>
    </lineage>
</organism>
<proteinExistence type="inferred from homology"/>
<name>PROA_SPHAL</name>
<feature type="chain" id="PRO_0000252594" description="Gamma-glutamyl phosphate reductase">
    <location>
        <begin position="1"/>
        <end position="429"/>
    </location>
</feature>
<sequence length="429" mass="44039">MITETLTASSARPGEAAALIAEMGARARTAAKRLAQTPTAEKAAALKAAAGAIRARSAAILAANAEDMAAGQTNGLSGAMLDRLRLDEGRLAAIADAIEAVAALPDPVGREIDRFTRPNGLELSRVRVPLGVIGIIYESRPNVTADAAALGLMAGNAVILRGGSEAVHSNRALHAAFAAGLVEAGLPADAVQLVPTQDRAAVGAMLRAQGLIDIIIPRGGKGLVARVQDEARVPVLAHLDGINHLYIDGAANPAKAVELAVNAKMRRTGICGATETILIDRAYPAPLGIVDALIAAGCEVRGDRDVAALSPHVESASAGDWDTEYLDAIVSIAMVDGLDGALAHIDAHSSRHTDAIVTEDAATAERFLTGVDSAIVMHNASTQFADGGEFGLGAEIGIATGRLHARGPVALEGLTTYKWLVRGSGQLRP</sequence>
<evidence type="ECO:0000255" key="1">
    <source>
        <dbReference type="HAMAP-Rule" id="MF_00412"/>
    </source>
</evidence>